<dbReference type="EMBL" id="CT978603">
    <property type="protein sequence ID" value="CAK28163.1"/>
    <property type="molecule type" value="Genomic_DNA"/>
</dbReference>
<dbReference type="SMR" id="A5GTF4"/>
<dbReference type="STRING" id="316278.SynRCC307_1260"/>
<dbReference type="KEGG" id="syr:SynRCC307_1260"/>
<dbReference type="eggNOG" id="COG0755">
    <property type="taxonomic scope" value="Bacteria"/>
</dbReference>
<dbReference type="HOGENOM" id="CLU_049710_2_4_3"/>
<dbReference type="Proteomes" id="UP000001115">
    <property type="component" value="Chromosome"/>
</dbReference>
<dbReference type="GO" id="GO:0031676">
    <property type="term" value="C:plasma membrane-derived thylakoid membrane"/>
    <property type="evidence" value="ECO:0007669"/>
    <property type="project" value="UniProtKB-SubCell"/>
</dbReference>
<dbReference type="GO" id="GO:0020037">
    <property type="term" value="F:heme binding"/>
    <property type="evidence" value="ECO:0007669"/>
    <property type="project" value="InterPro"/>
</dbReference>
<dbReference type="GO" id="GO:0015232">
    <property type="term" value="F:heme transmembrane transporter activity"/>
    <property type="evidence" value="ECO:0007669"/>
    <property type="project" value="InterPro"/>
</dbReference>
<dbReference type="GO" id="GO:0017004">
    <property type="term" value="P:cytochrome complex assembly"/>
    <property type="evidence" value="ECO:0007669"/>
    <property type="project" value="UniProtKB-UniRule"/>
</dbReference>
<dbReference type="HAMAP" id="MF_01391">
    <property type="entry name" value="CytC_CcsA"/>
    <property type="match status" value="1"/>
</dbReference>
<dbReference type="InterPro" id="IPR002541">
    <property type="entry name" value="Cyt_c_assembly"/>
</dbReference>
<dbReference type="InterPro" id="IPR003557">
    <property type="entry name" value="Cyt_c_biogenesis_CcmC"/>
</dbReference>
<dbReference type="InterPro" id="IPR017562">
    <property type="entry name" value="Cyt_c_biogenesis_CcsA"/>
</dbReference>
<dbReference type="InterPro" id="IPR045062">
    <property type="entry name" value="Cyt_c_biogenesis_CcsA/CcmC"/>
</dbReference>
<dbReference type="NCBIfam" id="TIGR03144">
    <property type="entry name" value="cytochr_II_ccsB"/>
    <property type="match status" value="1"/>
</dbReference>
<dbReference type="PANTHER" id="PTHR30071:SF1">
    <property type="entry name" value="CYTOCHROME B_B6 PROTEIN-RELATED"/>
    <property type="match status" value="1"/>
</dbReference>
<dbReference type="PANTHER" id="PTHR30071">
    <property type="entry name" value="HEME EXPORTER PROTEIN C"/>
    <property type="match status" value="1"/>
</dbReference>
<dbReference type="Pfam" id="PF01578">
    <property type="entry name" value="Cytochrom_C_asm"/>
    <property type="match status" value="1"/>
</dbReference>
<dbReference type="PRINTS" id="PR01386">
    <property type="entry name" value="CCMCBIOGNSIS"/>
</dbReference>
<keyword id="KW-0201">Cytochrome c-type biogenesis</keyword>
<keyword id="KW-0472">Membrane</keyword>
<keyword id="KW-1185">Reference proteome</keyword>
<keyword id="KW-0793">Thylakoid</keyword>
<keyword id="KW-0812">Transmembrane</keyword>
<keyword id="KW-1133">Transmembrane helix</keyword>
<sequence length="311" mass="33838">MLMPGLLNDPVLLLGLMAFGALLLALPLAFWNLSGEPRSSTSRVVQLLVVAANLLLTAQLLWRWLDSGHFPISNLYESLCFLAWGCTFTQLFVERSWPSPLVPAATTPMALVCVAFASFALPDTLQNAAPLVPALRSSWLVMHVSVIMMSYAALLVGSLLSAAVLFTQPGQAMELRSSSIGSGSFQKAGLQTDGGTVVLEAAPIALSERLDNLSYRTITVGFLLLTVGIISGAVWANEAWGSWWSWDPKETWALICWLVYAAYLHTRLSRGWQGRRPAWVAVSGLFVISVCYIGVNLLGIGLHSYGWFFDS</sequence>
<accession>A5GTF4</accession>
<reference key="1">
    <citation type="submission" date="2006-05" db="EMBL/GenBank/DDBJ databases">
        <authorList>
            <consortium name="Genoscope"/>
        </authorList>
    </citation>
    <scope>NUCLEOTIDE SEQUENCE [LARGE SCALE GENOMIC DNA]</scope>
    <source>
        <strain>RCC307</strain>
    </source>
</reference>
<proteinExistence type="inferred from homology"/>
<protein>
    <recommendedName>
        <fullName evidence="2">Cytochrome c biogenesis protein CcsA</fullName>
    </recommendedName>
</protein>
<organism>
    <name type="scientific">Synechococcus sp. (strain RCC307)</name>
    <dbReference type="NCBI Taxonomy" id="316278"/>
    <lineage>
        <taxon>Bacteria</taxon>
        <taxon>Bacillati</taxon>
        <taxon>Cyanobacteriota</taxon>
        <taxon>Cyanophyceae</taxon>
        <taxon>Synechococcales</taxon>
        <taxon>Synechococcaceae</taxon>
        <taxon>Synechococcus</taxon>
    </lineage>
</organism>
<gene>
    <name evidence="2" type="primary">ccsA</name>
    <name type="ordered locus">SynRCC307_1260</name>
</gene>
<comment type="function">
    <text evidence="2">Required during biogenesis of c-type cytochromes (cytochrome c6 and cytochrome f) at the step of heme attachment.</text>
</comment>
<comment type="subunit">
    <text evidence="1">May interact with ccs1.</text>
</comment>
<comment type="subcellular location">
    <subcellularLocation>
        <location evidence="2">Cellular thylakoid membrane</location>
        <topology evidence="2">Multi-pass membrane protein</topology>
    </subcellularLocation>
</comment>
<comment type="similarity">
    <text evidence="2">Belongs to the CcmF/CycK/Ccl1/NrfE/CcsA family.</text>
</comment>
<evidence type="ECO:0000250" key="1"/>
<evidence type="ECO:0000255" key="2">
    <source>
        <dbReference type="HAMAP-Rule" id="MF_01391"/>
    </source>
</evidence>
<feature type="chain" id="PRO_0000353721" description="Cytochrome c biogenesis protein CcsA">
    <location>
        <begin position="1"/>
        <end position="311"/>
    </location>
</feature>
<feature type="transmembrane region" description="Helical" evidence="2">
    <location>
        <begin position="11"/>
        <end position="31"/>
    </location>
</feature>
<feature type="transmembrane region" description="Helical" evidence="2">
    <location>
        <begin position="44"/>
        <end position="64"/>
    </location>
</feature>
<feature type="transmembrane region" description="Helical" evidence="2">
    <location>
        <begin position="68"/>
        <end position="88"/>
    </location>
</feature>
<feature type="transmembrane region" description="Helical" evidence="2">
    <location>
        <begin position="101"/>
        <end position="121"/>
    </location>
</feature>
<feature type="transmembrane region" description="Helical" evidence="2">
    <location>
        <begin position="146"/>
        <end position="166"/>
    </location>
</feature>
<feature type="transmembrane region" description="Helical" evidence="2">
    <location>
        <begin position="217"/>
        <end position="237"/>
    </location>
</feature>
<feature type="transmembrane region" description="Helical" evidence="2">
    <location>
        <begin position="251"/>
        <end position="268"/>
    </location>
</feature>
<feature type="transmembrane region" description="Helical" evidence="2">
    <location>
        <begin position="280"/>
        <end position="300"/>
    </location>
</feature>
<name>CCSA_SYNR3</name>